<gene>
    <name evidence="5" type="primary">SUC7</name>
    <name evidence="7" type="ordered locus">At1g66570</name>
    <name evidence="8" type="ORF">F28G11.1</name>
    <name evidence="9" type="ORF">T12I7.2</name>
</gene>
<keyword id="KW-0025">Alternative splicing</keyword>
<keyword id="KW-1003">Cell membrane</keyword>
<keyword id="KW-0472">Membrane</keyword>
<keyword id="KW-0597">Phosphoprotein</keyword>
<keyword id="KW-1185">Reference proteome</keyword>
<keyword id="KW-0762">Sugar transport</keyword>
<keyword id="KW-0769">Symport</keyword>
<keyword id="KW-0812">Transmembrane</keyword>
<keyword id="KW-1133">Transmembrane helix</keyword>
<keyword id="KW-0813">Transport</keyword>
<reference key="1">
    <citation type="journal article" date="2000" name="Nature">
        <title>Sequence and analysis of chromosome 1 of the plant Arabidopsis thaliana.</title>
        <authorList>
            <person name="Theologis A."/>
            <person name="Ecker J.R."/>
            <person name="Palm C.J."/>
            <person name="Federspiel N.A."/>
            <person name="Kaul S."/>
            <person name="White O."/>
            <person name="Alonso J."/>
            <person name="Altafi H."/>
            <person name="Araujo R."/>
            <person name="Bowman C.L."/>
            <person name="Brooks S.Y."/>
            <person name="Buehler E."/>
            <person name="Chan A."/>
            <person name="Chao Q."/>
            <person name="Chen H."/>
            <person name="Cheuk R.F."/>
            <person name="Chin C.W."/>
            <person name="Chung M.K."/>
            <person name="Conn L."/>
            <person name="Conway A.B."/>
            <person name="Conway A.R."/>
            <person name="Creasy T.H."/>
            <person name="Dewar K."/>
            <person name="Dunn P."/>
            <person name="Etgu P."/>
            <person name="Feldblyum T.V."/>
            <person name="Feng J.-D."/>
            <person name="Fong B."/>
            <person name="Fujii C.Y."/>
            <person name="Gill J.E."/>
            <person name="Goldsmith A.D."/>
            <person name="Haas B."/>
            <person name="Hansen N.F."/>
            <person name="Hughes B."/>
            <person name="Huizar L."/>
            <person name="Hunter J.L."/>
            <person name="Jenkins J."/>
            <person name="Johnson-Hopson C."/>
            <person name="Khan S."/>
            <person name="Khaykin E."/>
            <person name="Kim C.J."/>
            <person name="Koo H.L."/>
            <person name="Kremenetskaia I."/>
            <person name="Kurtz D.B."/>
            <person name="Kwan A."/>
            <person name="Lam B."/>
            <person name="Langin-Hooper S."/>
            <person name="Lee A."/>
            <person name="Lee J.M."/>
            <person name="Lenz C.A."/>
            <person name="Li J.H."/>
            <person name="Li Y.-P."/>
            <person name="Lin X."/>
            <person name="Liu S.X."/>
            <person name="Liu Z.A."/>
            <person name="Luros J.S."/>
            <person name="Maiti R."/>
            <person name="Marziali A."/>
            <person name="Militscher J."/>
            <person name="Miranda M."/>
            <person name="Nguyen M."/>
            <person name="Nierman W.C."/>
            <person name="Osborne B.I."/>
            <person name="Pai G."/>
            <person name="Peterson J."/>
            <person name="Pham P.K."/>
            <person name="Rizzo M."/>
            <person name="Rooney T."/>
            <person name="Rowley D."/>
            <person name="Sakano H."/>
            <person name="Salzberg S.L."/>
            <person name="Schwartz J.R."/>
            <person name="Shinn P."/>
            <person name="Southwick A.M."/>
            <person name="Sun H."/>
            <person name="Tallon L.J."/>
            <person name="Tambunga G."/>
            <person name="Toriumi M.J."/>
            <person name="Town C.D."/>
            <person name="Utterback T."/>
            <person name="Van Aken S."/>
            <person name="Vaysberg M."/>
            <person name="Vysotskaia V.S."/>
            <person name="Walker M."/>
            <person name="Wu D."/>
            <person name="Yu G."/>
            <person name="Fraser C.M."/>
            <person name="Venter J.C."/>
            <person name="Davis R.W."/>
        </authorList>
    </citation>
    <scope>NUCLEOTIDE SEQUENCE [LARGE SCALE GENOMIC DNA]</scope>
    <source>
        <strain>cv. Columbia</strain>
    </source>
</reference>
<reference key="2">
    <citation type="journal article" date="2017" name="Plant J.">
        <title>Araport11: a complete reannotation of the Arabidopsis thaliana reference genome.</title>
        <authorList>
            <person name="Cheng C.Y."/>
            <person name="Krishnakumar V."/>
            <person name="Chan A.P."/>
            <person name="Thibaud-Nissen F."/>
            <person name="Schobel S."/>
            <person name="Town C.D."/>
        </authorList>
    </citation>
    <scope>GENOME REANNOTATION</scope>
    <source>
        <strain>cv. Columbia</strain>
    </source>
</reference>
<reference key="3">
    <citation type="submission" date="2004-09" db="EMBL/GenBank/DDBJ databases">
        <title>Large-scale analysis of RIKEN Arabidopsis full-length (RAFL) cDNAs.</title>
        <authorList>
            <person name="Totoki Y."/>
            <person name="Seki M."/>
            <person name="Ishida J."/>
            <person name="Nakajima M."/>
            <person name="Enju A."/>
            <person name="Kamiya A."/>
            <person name="Narusaka M."/>
            <person name="Shin-i T."/>
            <person name="Nakagawa M."/>
            <person name="Sakamoto N."/>
            <person name="Oishi K."/>
            <person name="Kohara Y."/>
            <person name="Kobayashi M."/>
            <person name="Toyoda A."/>
            <person name="Sakaki Y."/>
            <person name="Sakurai T."/>
            <person name="Iida K."/>
            <person name="Akiyama K."/>
            <person name="Satou M."/>
            <person name="Toyoda T."/>
            <person name="Konagaya A."/>
            <person name="Carninci P."/>
            <person name="Kawai J."/>
            <person name="Hayashizaki Y."/>
            <person name="Shinozaki K."/>
        </authorList>
    </citation>
    <scope>NUCLEOTIDE SEQUENCE [LARGE SCALE MRNA]</scope>
    <source>
        <strain>cv. Columbia</strain>
    </source>
</reference>
<reference key="4">
    <citation type="submission" date="2006-10" db="EMBL/GenBank/DDBJ databases">
        <title>Arabidopsis ORF clones.</title>
        <authorList>
            <person name="Bautista V.R."/>
            <person name="Kim C.J."/>
            <person name="Chen H."/>
            <person name="Quinitio C."/>
            <person name="Ecker J.R."/>
        </authorList>
    </citation>
    <scope>NUCLEOTIDE SEQUENCE [LARGE SCALE MRNA]</scope>
    <source>
        <strain>cv. Columbia</strain>
    </source>
</reference>
<reference key="5">
    <citation type="journal article" date="2004" name="Plant J.">
        <title>AtSUC8 and AtSUC9 encode functional sucrose transporters, but the closely related AtSUC6 and AtSUC7 genes encode aberrant proteins in different Arabidopsis ecotypes.</title>
        <authorList>
            <person name="Sauer N."/>
            <person name="Ludwig A."/>
            <person name="Knoblauch A."/>
            <person name="Rothe P."/>
            <person name="Gahrtz M."/>
            <person name="Klebl F."/>
        </authorList>
    </citation>
    <scope>TISSUE SPECIFICITY</scope>
</reference>
<dbReference type="EMBL" id="AC074025">
    <property type="protein sequence ID" value="AAG51155.1"/>
    <property type="molecule type" value="Genomic_DNA"/>
</dbReference>
<dbReference type="EMBL" id="AC079285">
    <property type="protein sequence ID" value="AAG51172.1"/>
    <property type="molecule type" value="Genomic_DNA"/>
</dbReference>
<dbReference type="EMBL" id="CP002684">
    <property type="protein sequence ID" value="AEE34528.1"/>
    <property type="molecule type" value="Genomic_DNA"/>
</dbReference>
<dbReference type="EMBL" id="AK176510">
    <property type="protein sequence ID" value="BAD44273.1"/>
    <property type="molecule type" value="mRNA"/>
</dbReference>
<dbReference type="EMBL" id="BT029186">
    <property type="protein sequence ID" value="ABJ17121.1"/>
    <property type="molecule type" value="mRNA"/>
</dbReference>
<dbReference type="PIR" id="E96691">
    <property type="entry name" value="E96691"/>
</dbReference>
<dbReference type="RefSeq" id="NP_176830.1">
    <molecule id="Q67YF8-1"/>
    <property type="nucleotide sequence ID" value="NM_105328.3"/>
</dbReference>
<dbReference type="SMR" id="Q67YF8"/>
<dbReference type="BioGRID" id="28196">
    <property type="interactions" value="4"/>
</dbReference>
<dbReference type="FunCoup" id="Q67YF8">
    <property type="interactions" value="840"/>
</dbReference>
<dbReference type="IntAct" id="Q67YF8">
    <property type="interactions" value="2"/>
</dbReference>
<dbReference type="STRING" id="3702.Q67YF8"/>
<dbReference type="PaxDb" id="3702-AT1G66570.1"/>
<dbReference type="ProteomicsDB" id="245354">
    <molecule id="Q67YF8-1"/>
</dbReference>
<dbReference type="EnsemblPlants" id="AT1G66570.1">
    <molecule id="Q67YF8-1"/>
    <property type="protein sequence ID" value="AT1G66570.1"/>
    <property type="gene ID" value="AT1G66570"/>
</dbReference>
<dbReference type="GeneID" id="842975"/>
<dbReference type="Gramene" id="AT1G66570.1">
    <molecule id="Q67YF8-1"/>
    <property type="protein sequence ID" value="AT1G66570.1"/>
    <property type="gene ID" value="AT1G66570"/>
</dbReference>
<dbReference type="KEGG" id="ath:AT1G66570"/>
<dbReference type="Araport" id="AT1G66570"/>
<dbReference type="TAIR" id="AT1G66570">
    <property type="gene designation" value="SUC7"/>
</dbReference>
<dbReference type="eggNOG" id="KOG0637">
    <property type="taxonomic scope" value="Eukaryota"/>
</dbReference>
<dbReference type="HOGENOM" id="CLU_025234_3_0_1"/>
<dbReference type="InParanoid" id="Q67YF8"/>
<dbReference type="OMA" id="QSYRTFV"/>
<dbReference type="PhylomeDB" id="Q67YF8"/>
<dbReference type="UniPathway" id="UPA00238"/>
<dbReference type="PRO" id="PR:Q67YF8"/>
<dbReference type="Proteomes" id="UP000006548">
    <property type="component" value="Chromosome 1"/>
</dbReference>
<dbReference type="ExpressionAtlas" id="Q67YF8">
    <property type="expression patterns" value="baseline and differential"/>
</dbReference>
<dbReference type="GO" id="GO:0005886">
    <property type="term" value="C:plasma membrane"/>
    <property type="evidence" value="ECO:0007669"/>
    <property type="project" value="UniProtKB-SubCell"/>
</dbReference>
<dbReference type="GO" id="GO:0008515">
    <property type="term" value="F:sucrose transmembrane transporter activity"/>
    <property type="evidence" value="ECO:0007669"/>
    <property type="project" value="InterPro"/>
</dbReference>
<dbReference type="GO" id="GO:0015293">
    <property type="term" value="F:symporter activity"/>
    <property type="evidence" value="ECO:0007669"/>
    <property type="project" value="UniProtKB-KW"/>
</dbReference>
<dbReference type="GO" id="GO:0005985">
    <property type="term" value="P:sucrose metabolic process"/>
    <property type="evidence" value="ECO:0007669"/>
    <property type="project" value="UniProtKB-UniPathway"/>
</dbReference>
<dbReference type="CDD" id="cd17313">
    <property type="entry name" value="MFS_SLC45_SUC"/>
    <property type="match status" value="1"/>
</dbReference>
<dbReference type="FunFam" id="1.20.1250.20:FF:000174">
    <property type="entry name" value="Sucrose transport protein"/>
    <property type="match status" value="1"/>
</dbReference>
<dbReference type="Gene3D" id="1.20.1250.20">
    <property type="entry name" value="MFS general substrate transporter like domains"/>
    <property type="match status" value="1"/>
</dbReference>
<dbReference type="InterPro" id="IPR036259">
    <property type="entry name" value="MFS_trans_sf"/>
</dbReference>
<dbReference type="InterPro" id="IPR005989">
    <property type="entry name" value="Suc_symporter_pln"/>
</dbReference>
<dbReference type="NCBIfam" id="TIGR01301">
    <property type="entry name" value="GPH_sucrose"/>
    <property type="match status" value="1"/>
</dbReference>
<dbReference type="PANTHER" id="PTHR19432:SF94">
    <property type="entry name" value="SUCROSE TRANSPORT PROTEIN SUC7-RELATED"/>
    <property type="match status" value="1"/>
</dbReference>
<dbReference type="PANTHER" id="PTHR19432">
    <property type="entry name" value="SUGAR TRANSPORTER"/>
    <property type="match status" value="1"/>
</dbReference>
<dbReference type="Pfam" id="PF13347">
    <property type="entry name" value="MFS_2"/>
    <property type="match status" value="1"/>
</dbReference>
<dbReference type="SUPFAM" id="SSF103473">
    <property type="entry name" value="MFS general substrate transporter"/>
    <property type="match status" value="1"/>
</dbReference>
<name>SUC7_ARATH</name>
<sequence length="491" mass="52873">MSDLQANKDETTVDRQSSSSVDLDGPSPLRKMISVASIAAGIQFGWALQLSLLTPYVQLLGVPHKWPSFIWLCGPVSGLLVQPSVGYFSDRCTSRFGRRRPFIATGALLVAVSVVLIGYAADFGHSMGDKIDKPVKMRAVVIFALGFWILDVANNTLQGPCRAFLGDLAAGDAQKTRTANAFFSFFMAVGNVLGYAAGSYTNLYKIFPFTMTKACDIYCANLKSCFFLSITLLLVVTIIALWYVEDKQWSPKADSDNEKTPFFGEIFGAFKVMKRPMWMLLIVTALNWIAWFPFLLYDTDWMGREVYGGDSKGDDKMKKLYNQGIHVGALGLMLNSIVLGVMSLGIEGISRKMGGAKRLWGAVNIILAVCLAMTVLVTKKAEEHRRIAGPMALPTDGIRAGALTLFALLGIPLAITFSIPFALASIISSSSGAGQRLSLGVLNMAIVIPQMIVSFGVGPIDALFGDGNLPGFVVGAIAAAVSSIVAFTVLP</sequence>
<comment type="function">
    <text>May be responsible for the transport of glucosides into the cell, with the concomitant uptake of protons (symport system). Does not seem to transport sucrose.</text>
</comment>
<comment type="pathway">
    <text>Glycan biosynthesis; sucrose metabolism.</text>
</comment>
<comment type="subcellular location">
    <subcellularLocation>
        <location evidence="6">Cell membrane</location>
        <topology evidence="6">Multi-pass membrane protein</topology>
    </subcellularLocation>
</comment>
<comment type="alternative products">
    <event type="alternative splicing"/>
    <isoform>
        <id>Q67YF8-1</id>
        <name>1</name>
        <sequence type="displayed"/>
    </isoform>
    <text>A number of isoforms are produced. According to EST sequences.</text>
</comment>
<comment type="tissue specificity">
    <text evidence="4">Expressed in anthers.</text>
</comment>
<comment type="similarity">
    <text evidence="6">Belongs to the glycoside-pentoside-hexuronide (GPH) cation symporter transporter (TC 2.A.2.4) family.</text>
</comment>
<evidence type="ECO:0000250" key="1">
    <source>
        <dbReference type="UniProtKB" id="Q39232"/>
    </source>
</evidence>
<evidence type="ECO:0000255" key="2"/>
<evidence type="ECO:0000256" key="3">
    <source>
        <dbReference type="SAM" id="MobiDB-lite"/>
    </source>
</evidence>
<evidence type="ECO:0000269" key="4">
    <source>
    </source>
</evidence>
<evidence type="ECO:0000303" key="5">
    <source>
    </source>
</evidence>
<evidence type="ECO:0000305" key="6"/>
<evidence type="ECO:0000312" key="7">
    <source>
        <dbReference type="Araport" id="AT1G66570"/>
    </source>
</evidence>
<evidence type="ECO:0000312" key="8">
    <source>
        <dbReference type="EMBL" id="AAG51155.1"/>
    </source>
</evidence>
<evidence type="ECO:0000312" key="9">
    <source>
        <dbReference type="EMBL" id="AAG51172.1"/>
    </source>
</evidence>
<organism>
    <name type="scientific">Arabidopsis thaliana</name>
    <name type="common">Mouse-ear cress</name>
    <dbReference type="NCBI Taxonomy" id="3702"/>
    <lineage>
        <taxon>Eukaryota</taxon>
        <taxon>Viridiplantae</taxon>
        <taxon>Streptophyta</taxon>
        <taxon>Embryophyta</taxon>
        <taxon>Tracheophyta</taxon>
        <taxon>Spermatophyta</taxon>
        <taxon>Magnoliopsida</taxon>
        <taxon>eudicotyledons</taxon>
        <taxon>Gunneridae</taxon>
        <taxon>Pentapetalae</taxon>
        <taxon>rosids</taxon>
        <taxon>malvids</taxon>
        <taxon>Brassicales</taxon>
        <taxon>Brassicaceae</taxon>
        <taxon>Camelineae</taxon>
        <taxon>Arabidopsis</taxon>
    </lineage>
</organism>
<protein>
    <recommendedName>
        <fullName evidence="5">Sucrose transport protein SUC7</fullName>
        <shortName evidence="5">AtSUC7</shortName>
    </recommendedName>
    <alternativeName>
        <fullName>Sucrose permease 7</fullName>
    </alternativeName>
    <alternativeName>
        <fullName evidence="5">Sucrose-proton symporter 7</fullName>
    </alternativeName>
</protein>
<proteinExistence type="evidence at transcript level"/>
<feature type="chain" id="PRO_0000122528" description="Sucrose transport protein SUC7">
    <location>
        <begin position="1"/>
        <end position="491"/>
    </location>
</feature>
<feature type="topological domain" description="Cytoplasmic" evidence="2">
    <location>
        <begin position="1"/>
        <end position="32"/>
    </location>
</feature>
<feature type="transmembrane region" description="Helical" evidence="2">
    <location>
        <begin position="33"/>
        <end position="53"/>
    </location>
</feature>
<feature type="topological domain" description="Extracellular" evidence="2">
    <location>
        <begin position="54"/>
        <end position="67"/>
    </location>
</feature>
<feature type="transmembrane region" description="Helical" evidence="2">
    <location>
        <begin position="68"/>
        <end position="88"/>
    </location>
</feature>
<feature type="topological domain" description="Cytoplasmic" evidence="2">
    <location>
        <begin position="89"/>
        <end position="100"/>
    </location>
</feature>
<feature type="transmembrane region" description="Helical" evidence="2">
    <location>
        <begin position="101"/>
        <end position="121"/>
    </location>
</feature>
<feature type="topological domain" description="Extracellular" evidence="2">
    <location>
        <begin position="122"/>
        <end position="138"/>
    </location>
</feature>
<feature type="transmembrane region" description="Helical" evidence="2">
    <location>
        <begin position="139"/>
        <end position="159"/>
    </location>
</feature>
<feature type="topological domain" description="Cytoplasmic" evidence="2">
    <location>
        <begin position="160"/>
        <end position="180"/>
    </location>
</feature>
<feature type="transmembrane region" description="Helical" evidence="2">
    <location>
        <begin position="181"/>
        <end position="201"/>
    </location>
</feature>
<feature type="topological domain" description="Extracellular" evidence="2">
    <location>
        <begin position="202"/>
        <end position="223"/>
    </location>
</feature>
<feature type="transmembrane region" description="Helical" evidence="2">
    <location>
        <begin position="224"/>
        <end position="244"/>
    </location>
</feature>
<feature type="topological domain" description="Cytoplasmic" evidence="2">
    <location>
        <begin position="245"/>
        <end position="276"/>
    </location>
</feature>
<feature type="transmembrane region" description="Helical" evidence="2">
    <location>
        <begin position="277"/>
        <end position="297"/>
    </location>
</feature>
<feature type="topological domain" description="Extracellular" evidence="2">
    <location>
        <begin position="298"/>
        <end position="323"/>
    </location>
</feature>
<feature type="transmembrane region" description="Helical" evidence="2">
    <location>
        <begin position="324"/>
        <end position="344"/>
    </location>
</feature>
<feature type="topological domain" description="Cytoplasmic" evidence="2">
    <location>
        <begin position="345"/>
        <end position="358"/>
    </location>
</feature>
<feature type="transmembrane region" description="Helical" evidence="2">
    <location>
        <begin position="359"/>
        <end position="379"/>
    </location>
</feature>
<feature type="topological domain" description="Extracellular" evidence="2">
    <location>
        <begin position="380"/>
        <end position="402"/>
    </location>
</feature>
<feature type="transmembrane region" description="Helical" evidence="2">
    <location>
        <begin position="403"/>
        <end position="423"/>
    </location>
</feature>
<feature type="topological domain" description="Cytoplasmic" evidence="2">
    <location>
        <begin position="424"/>
        <end position="443"/>
    </location>
</feature>
<feature type="transmembrane region" description="Helical" evidence="2">
    <location>
        <begin position="444"/>
        <end position="464"/>
    </location>
</feature>
<feature type="topological domain" description="Extracellular" evidence="2">
    <location>
        <begin position="465"/>
        <end position="468"/>
    </location>
</feature>
<feature type="transmembrane region" description="Helical" evidence="2">
    <location>
        <begin position="469"/>
        <end position="489"/>
    </location>
</feature>
<feature type="topological domain" description="Cytoplasmic" evidence="2">
    <location>
        <begin position="490"/>
        <end position="491"/>
    </location>
</feature>
<feature type="region of interest" description="Disordered" evidence="3">
    <location>
        <begin position="1"/>
        <end position="25"/>
    </location>
</feature>
<feature type="compositionally biased region" description="Basic and acidic residues" evidence="3">
    <location>
        <begin position="1"/>
        <end position="13"/>
    </location>
</feature>
<feature type="modified residue" description="Phosphoserine" evidence="1">
    <location>
        <position position="17"/>
    </location>
</feature>
<feature type="sequence conflict" description="In Ref. 3; BAD44273." evidence="6" ref="3">
    <original>M</original>
    <variation>V</variation>
    <location>
        <position position="279"/>
    </location>
</feature>
<accession>Q67YF8</accession>
<accession>Q058N2</accession>
<accession>Q9C6H8</accession>
<accession>Q9C716</accession>